<keyword id="KW-0687">Ribonucleoprotein</keyword>
<keyword id="KW-0689">Ribosomal protein</keyword>
<keyword id="KW-0694">RNA-binding</keyword>
<keyword id="KW-0699">rRNA-binding</keyword>
<gene>
    <name evidence="1" type="primary">rplI</name>
    <name type="ordered locus">SeSA_A4662</name>
</gene>
<reference key="1">
    <citation type="journal article" date="2011" name="J. Bacteriol.">
        <title>Comparative genomics of 28 Salmonella enterica isolates: evidence for CRISPR-mediated adaptive sublineage evolution.</title>
        <authorList>
            <person name="Fricke W.F."/>
            <person name="Mammel M.K."/>
            <person name="McDermott P.F."/>
            <person name="Tartera C."/>
            <person name="White D.G."/>
            <person name="Leclerc J.E."/>
            <person name="Ravel J."/>
            <person name="Cebula T.A."/>
        </authorList>
    </citation>
    <scope>NUCLEOTIDE SEQUENCE [LARGE SCALE GENOMIC DNA]</scope>
    <source>
        <strain>CVM19633</strain>
    </source>
</reference>
<dbReference type="EMBL" id="CP001127">
    <property type="protein sequence ID" value="ACF89945.1"/>
    <property type="molecule type" value="Genomic_DNA"/>
</dbReference>
<dbReference type="RefSeq" id="WP_001196065.1">
    <property type="nucleotide sequence ID" value="NC_011094.1"/>
</dbReference>
<dbReference type="SMR" id="B4TT36"/>
<dbReference type="GeneID" id="66758618"/>
<dbReference type="KEGG" id="sew:SeSA_A4662"/>
<dbReference type="HOGENOM" id="CLU_078938_4_1_6"/>
<dbReference type="Proteomes" id="UP000001865">
    <property type="component" value="Chromosome"/>
</dbReference>
<dbReference type="GO" id="GO:1990904">
    <property type="term" value="C:ribonucleoprotein complex"/>
    <property type="evidence" value="ECO:0007669"/>
    <property type="project" value="UniProtKB-KW"/>
</dbReference>
<dbReference type="GO" id="GO:0005840">
    <property type="term" value="C:ribosome"/>
    <property type="evidence" value="ECO:0007669"/>
    <property type="project" value="UniProtKB-KW"/>
</dbReference>
<dbReference type="GO" id="GO:0019843">
    <property type="term" value="F:rRNA binding"/>
    <property type="evidence" value="ECO:0007669"/>
    <property type="project" value="UniProtKB-UniRule"/>
</dbReference>
<dbReference type="GO" id="GO:0003735">
    <property type="term" value="F:structural constituent of ribosome"/>
    <property type="evidence" value="ECO:0007669"/>
    <property type="project" value="InterPro"/>
</dbReference>
<dbReference type="GO" id="GO:0006412">
    <property type="term" value="P:translation"/>
    <property type="evidence" value="ECO:0007669"/>
    <property type="project" value="UniProtKB-UniRule"/>
</dbReference>
<dbReference type="FunFam" id="3.10.430.100:FF:000001">
    <property type="entry name" value="50S ribosomal protein L9"/>
    <property type="match status" value="1"/>
</dbReference>
<dbReference type="FunFam" id="3.40.5.10:FF:000001">
    <property type="entry name" value="50S ribosomal protein L9"/>
    <property type="match status" value="1"/>
</dbReference>
<dbReference type="Gene3D" id="3.10.430.100">
    <property type="entry name" value="Ribosomal protein L9, C-terminal domain"/>
    <property type="match status" value="1"/>
</dbReference>
<dbReference type="Gene3D" id="3.40.5.10">
    <property type="entry name" value="Ribosomal protein L9, N-terminal domain"/>
    <property type="match status" value="1"/>
</dbReference>
<dbReference type="HAMAP" id="MF_00503">
    <property type="entry name" value="Ribosomal_bL9"/>
    <property type="match status" value="1"/>
</dbReference>
<dbReference type="InterPro" id="IPR000244">
    <property type="entry name" value="Ribosomal_bL9"/>
</dbReference>
<dbReference type="InterPro" id="IPR009027">
    <property type="entry name" value="Ribosomal_bL9/RNase_H1_N"/>
</dbReference>
<dbReference type="InterPro" id="IPR020594">
    <property type="entry name" value="Ribosomal_bL9_bac/chp"/>
</dbReference>
<dbReference type="InterPro" id="IPR020069">
    <property type="entry name" value="Ribosomal_bL9_C"/>
</dbReference>
<dbReference type="InterPro" id="IPR036791">
    <property type="entry name" value="Ribosomal_bL9_C_sf"/>
</dbReference>
<dbReference type="InterPro" id="IPR020070">
    <property type="entry name" value="Ribosomal_bL9_N"/>
</dbReference>
<dbReference type="InterPro" id="IPR036935">
    <property type="entry name" value="Ribosomal_bL9_N_sf"/>
</dbReference>
<dbReference type="NCBIfam" id="TIGR00158">
    <property type="entry name" value="L9"/>
    <property type="match status" value="1"/>
</dbReference>
<dbReference type="PANTHER" id="PTHR21368">
    <property type="entry name" value="50S RIBOSOMAL PROTEIN L9"/>
    <property type="match status" value="1"/>
</dbReference>
<dbReference type="Pfam" id="PF03948">
    <property type="entry name" value="Ribosomal_L9_C"/>
    <property type="match status" value="1"/>
</dbReference>
<dbReference type="Pfam" id="PF01281">
    <property type="entry name" value="Ribosomal_L9_N"/>
    <property type="match status" value="1"/>
</dbReference>
<dbReference type="SUPFAM" id="SSF55658">
    <property type="entry name" value="L9 N-domain-like"/>
    <property type="match status" value="1"/>
</dbReference>
<dbReference type="SUPFAM" id="SSF55653">
    <property type="entry name" value="Ribosomal protein L9 C-domain"/>
    <property type="match status" value="1"/>
</dbReference>
<dbReference type="PROSITE" id="PS00651">
    <property type="entry name" value="RIBOSOMAL_L9"/>
    <property type="match status" value="1"/>
</dbReference>
<name>RL9_SALSV</name>
<feature type="chain" id="PRO_1000126970" description="Large ribosomal subunit protein bL9">
    <location>
        <begin position="1"/>
        <end position="149"/>
    </location>
</feature>
<organism>
    <name type="scientific">Salmonella schwarzengrund (strain CVM19633)</name>
    <dbReference type="NCBI Taxonomy" id="439843"/>
    <lineage>
        <taxon>Bacteria</taxon>
        <taxon>Pseudomonadati</taxon>
        <taxon>Pseudomonadota</taxon>
        <taxon>Gammaproteobacteria</taxon>
        <taxon>Enterobacterales</taxon>
        <taxon>Enterobacteriaceae</taxon>
        <taxon>Salmonella</taxon>
    </lineage>
</organism>
<comment type="function">
    <text evidence="1">Binds to the 23S rRNA.</text>
</comment>
<comment type="similarity">
    <text evidence="1">Belongs to the bacterial ribosomal protein bL9 family.</text>
</comment>
<accession>B4TT36</accession>
<proteinExistence type="inferred from homology"/>
<sequence>MQVILLDKVANLGSLGDQVNVKAGYARNFLVPQGKAVPATKKNVEYFEARRAELEAKLADVLAAANARAEKINALETVTIASKAGDEGKLFGSIGTRDIADAVTAAGVDVAKSEVRLPNGVLRTTGEHEVNFQVHSEVFAKVIINVVAE</sequence>
<evidence type="ECO:0000255" key="1">
    <source>
        <dbReference type="HAMAP-Rule" id="MF_00503"/>
    </source>
</evidence>
<evidence type="ECO:0000305" key="2"/>
<protein>
    <recommendedName>
        <fullName evidence="1">Large ribosomal subunit protein bL9</fullName>
    </recommendedName>
    <alternativeName>
        <fullName evidence="2">50S ribosomal protein L9</fullName>
    </alternativeName>
</protein>